<sequence length="889" mass="97702">MAERGRLGLPGAPGALNTPVPMNLFATWEVDGSSPSCVPRLCSLTLKKLVVFKELEKELISVVIAVKMQGSKRILRSHEIVLPPSGQVETDLALTFSLQYPHFLKREGNKLQIMLQRRKRYKNRTILGYKTLAAGSISMAEVMQHPSEGGQVLSLCSSIKEAPVKAAEIWIASLSSQPIDHEDSTMQAGPKAKSTDNYSEEEYESFSSEQEASDDAVQGQDLDEDDFDVGKPKKQRRSIVRTTSMTRQQNFKQKVVALLRRFKVSDEVLDSEQDPAEHIPEAEEDLDLLYDTLDMEHPSDSGPDMEDDDSVLSTPKPKLRPYFEGLSHSSSQTEIGSIHSARSHKEPPSPADVPEKTRSLGGRQPSDSVSDTVALGVPGPREHPGQPEDSPEAEASTLDVFTERLPPSGRITKTESLVIPSTRSEGKQAGRRGRSTSLKERQAARPQNERANSLDNERCPDARSQLQIPRKTVYDQLNHILISDDQLPENIILVNTSDWQGQFLSDVLQRHTLPVVCTCSPADVQAAFSTIVSRIQRYCNCNSQPPTPVKIAVAGAQHYLSAILRLFVEQLSHKTPDWLGYMRFLVIPLGSHPVARYLGSVDYRYNNFFQDLAWRDLFNKLEAQSAVQDTPDIVSRITQYIAGANCAHQLPIAEAMLTYKQKSPDEESSQKFIPFVGVVKVGIVEPSSATSGDSDDAAPSGSGTLSSTPPSASPAAKEASPTPPSSPSVSGGLSSPSQGVGAELMGLQVDYWTAAQPADRKRDAEKKDLPVTKNTLKCTFRSLQVSRLPSSGEAAATPTMSMTVVTKEKNKKVMFLPKKAKDKDVESKSQCIEGISRLICTARQQQNMLRVLIDGVECSDVKFFQLAAQWSSHVKHFPICIFGHSKATF</sequence>
<feature type="chain" id="PRO_0000259511" description="Phosphofurin acidic cluster sorting protein 2">
    <location>
        <begin position="1"/>
        <end position="889"/>
    </location>
</feature>
<feature type="region of interest" description="Disordered" evidence="2">
    <location>
        <begin position="180"/>
        <end position="246"/>
    </location>
</feature>
<feature type="region of interest" description="Disordered" evidence="2">
    <location>
        <begin position="293"/>
        <end position="463"/>
    </location>
</feature>
<feature type="region of interest" description="Disordered" evidence="2">
    <location>
        <begin position="687"/>
        <end position="740"/>
    </location>
</feature>
<feature type="compositionally biased region" description="Basic and acidic residues" evidence="2">
    <location>
        <begin position="343"/>
        <end position="358"/>
    </location>
</feature>
<feature type="compositionally biased region" description="Low complexity" evidence="2">
    <location>
        <begin position="687"/>
        <end position="720"/>
    </location>
</feature>
<feature type="compositionally biased region" description="Low complexity" evidence="2">
    <location>
        <begin position="727"/>
        <end position="737"/>
    </location>
</feature>
<feature type="modified residue" description="Phosphoserine" evidence="1">
    <location>
        <position position="390"/>
    </location>
</feature>
<feature type="modified residue" description="Phosphoserine" evidence="12 13">
    <location>
        <position position="416"/>
    </location>
</feature>
<feature type="modified residue" description="Phosphoserine" evidence="13">
    <location>
        <position position="453"/>
    </location>
</feature>
<feature type="modified residue" description="Phosphoserine" evidence="1">
    <location>
        <position position="691"/>
    </location>
</feature>
<feature type="modified residue" description="Phosphoserine" evidence="1">
    <location>
        <position position="694"/>
    </location>
</feature>
<feature type="splice variant" id="VSP_053815" description="In isoform 4." evidence="10">
    <location>
        <begin position="1"/>
        <end position="67"/>
    </location>
</feature>
<feature type="splice variant" id="VSP_030294" description="In isoform 4." evidence="8">
    <location>
        <begin position="240"/>
        <end position="247"/>
    </location>
</feature>
<feature type="splice variant" id="VSP_021409" description="In isoform 2." evidence="9">
    <original>Q</original>
    <variation>QVQLQ</variation>
    <location>
        <position position="467"/>
    </location>
</feature>
<feature type="splice variant" id="VSP_021410" description="In isoform 2." evidence="9">
    <original>K</original>
    <variation>KRKKHFHFDFTL</variation>
    <location>
        <position position="662"/>
    </location>
</feature>
<feature type="sequence variant" id="VAR_028947" description="In dbSNP:rs8010888.">
    <original>T</original>
    <variation>A</variation>
    <location>
        <position position="185"/>
    </location>
</feature>
<feature type="sequence variant" id="VAR_081137" description="In DEE66; increased interaction with SIRT1; increased interaction with HDAC1; increased interaction with TRPV1; dbSNP:rs1555408401." evidence="6">
    <original>E</original>
    <variation>K</variation>
    <location>
        <position position="209"/>
    </location>
</feature>
<feature type="sequence variant" id="VAR_053798" description="In dbSNP:rs4076933.">
    <original>L</original>
    <variation>S</variation>
    <location>
        <position position="493"/>
    </location>
</feature>
<feature type="sequence conflict" description="In Ref. 1; AAQ83882." evidence="10" ref="1">
    <original>P</original>
    <variation>L</variation>
    <location>
        <position position="13"/>
    </location>
</feature>
<feature type="sequence conflict" description="In Ref. 5; AAH50351." evidence="10" ref="5">
    <original>E</original>
    <variation>D</variation>
    <location>
        <position position="168"/>
    </location>
</feature>
<feature type="sequence conflict" description="In Ref. 5; AAH50351." evidence="10" ref="5">
    <original>D</original>
    <variation>G</variation>
    <location>
        <position position="266"/>
    </location>
</feature>
<feature type="sequence conflict" description="In Ref. 5; AAH50351." evidence="10" ref="5">
    <original>P</original>
    <variation>H</variation>
    <location>
        <position position="469"/>
    </location>
</feature>
<proteinExistence type="evidence at protein level"/>
<name>PACS2_HUMAN</name>
<comment type="function">
    <text evidence="3 4">Multifunctional sorting protein that controls the endoplasmic reticulum (ER)-mitochondria communication, including the apposition of mitochondria with the ER and ER homeostasis. In addition, in response to apoptotic inducer, translocates BIB to mitochondria, which initiates a sequence of events including the formation of mitochondrial truncated BID, the release of cytochrome c, the activation of caspase-3 thereby causing cell death. May also be involved in ion channel trafficking, directing acidic cluster-containing ion channels to distinct subcellular compartments.</text>
</comment>
<comment type="subunit">
    <text evidence="3 4 5 6 7">Interacts with BID and PKD2 (PubMed:15692563, PubMed:15692567). Interacts with SIRT1 (PubMed:29656858). Interacts with HDAC1 (PubMed:29656858). Interacts with TRPV1 (PubMed:29656858). Interacts with WDR37 (PubMed:34642815).</text>
</comment>
<comment type="subunit">
    <text evidence="5">(Microbial infection) Interacts with HIV-1 Nef.</text>
</comment>
<comment type="interaction">
    <interactant intactId="EBI-7024587">
        <id>Q86VP3</id>
    </interactant>
    <interactant intactId="EBI-347088">
        <id>P63104</id>
        <label>YWHAZ</label>
    </interactant>
    <organismsDiffer>false</organismsDiffer>
    <experiments>3</experiments>
</comment>
<comment type="subcellular location">
    <subcellularLocation>
        <location evidence="4">Endoplasmic reticulum</location>
    </subcellularLocation>
    <subcellularLocation>
        <location evidence="4">Mitochondrion</location>
    </subcellularLocation>
</comment>
<comment type="alternative products">
    <event type="alternative splicing"/>
    <isoform>
        <id>Q86VP3-1</id>
        <name>1</name>
        <sequence type="displayed"/>
    </isoform>
    <isoform>
        <id>Q86VP3-2</id>
        <name>2</name>
        <sequence type="described" ref="VSP_021409 VSP_021410"/>
    </isoform>
    <isoform>
        <id>Q86VP3-4</id>
        <name>4</name>
        <sequence type="described" ref="VSP_053815 VSP_030294"/>
    </isoform>
</comment>
<comment type="tissue specificity">
    <text evidence="4">Broadly expressed, with greatest levels in skeletal muscle followed by heart, brain, pancreas and testis.</text>
</comment>
<comment type="disease" evidence="6">
    <disease id="DI-05304">
        <name>Developmental and epileptic encephalopathy 66</name>
        <acronym>DEE66</acronym>
        <description>A form of epileptic encephalopathy, a heterogeneous group of severe early-onset epilepsies characterized by refractory seizures, neurodevelopmental impairment, and poor prognosis. Development is normal prior to seizure onset, after which cognitive and motor delays become apparent. DEE66 is an autosomal dominant form characterized by onset of seizures in first days or weeks of life.</description>
        <dbReference type="MIM" id="618067"/>
    </disease>
    <text>The disease is caused by variants affecting the gene represented in this entry.</text>
</comment>
<comment type="similarity">
    <text evidence="10">Belongs to the PACS family.</text>
</comment>
<comment type="sequence caution" evidence="10">
    <conflict type="erroneous initiation">
        <sequence resource="EMBL-CDS" id="AAI31592"/>
    </conflict>
    <text>Extended N-terminus.</text>
</comment>
<comment type="sequence caution" evidence="10">
    <conflict type="erroneous initiation">
        <sequence resource="EMBL-CDS" id="BAA25528"/>
    </conflict>
    <text>Extended N-terminus.</text>
</comment>
<reference key="1">
    <citation type="journal article" date="2005" name="EMBO J.">
        <title>PACS-2 controls endoplasmic reticulum-mitochondria communication and Bid-mediated apoptosis.</title>
        <authorList>
            <person name="Simmen T."/>
            <person name="Aslan J.E."/>
            <person name="Blagoveshchenskaya A.D."/>
            <person name="Thomas L."/>
            <person name="Wan L."/>
            <person name="Xiang Y."/>
            <person name="Feliciangeli S.F."/>
            <person name="Hung C.-H."/>
            <person name="Crump C.M."/>
            <person name="Thomas G."/>
        </authorList>
    </citation>
    <scope>NUCLEOTIDE SEQUENCE [MRNA] (ISOFORM 1)</scope>
    <scope>FUNCTION</scope>
    <scope>INTERACTION WITH BID</scope>
    <scope>SUBCELLULAR LOCATION</scope>
    <scope>TISSUE SPECIFICITY</scope>
    <source>
        <tissue>Brain</tissue>
    </source>
</reference>
<reference key="2">
    <citation type="submission" date="2007-08" db="EMBL/GenBank/DDBJ databases">
        <authorList>
            <person name="Xiang Y."/>
            <person name="Wan L."/>
            <person name="Simmen T."/>
            <person name="Thomas G."/>
        </authorList>
    </citation>
    <scope>SEQUENCE REVISION TO 479; 508; 540 AND 714</scope>
</reference>
<reference key="3">
    <citation type="journal article" date="1998" name="DNA Res.">
        <title>Prediction of the coding sequences of unidentified human genes. IX. The complete sequences of 100 new cDNA clones from brain which can code for large proteins in vitro.</title>
        <authorList>
            <person name="Nagase T."/>
            <person name="Ishikawa K."/>
            <person name="Miyajima N."/>
            <person name="Tanaka A."/>
            <person name="Kotani H."/>
            <person name="Nomura N."/>
            <person name="Ohara O."/>
        </authorList>
    </citation>
    <scope>NUCLEOTIDE SEQUENCE [LARGE SCALE MRNA] (ISOFORM 2)</scope>
    <source>
        <tissue>Brain</tissue>
    </source>
</reference>
<reference key="4">
    <citation type="journal article" date="2003" name="Nature">
        <title>The DNA sequence and analysis of human chromosome 14.</title>
        <authorList>
            <person name="Heilig R."/>
            <person name="Eckenberg R."/>
            <person name="Petit J.-L."/>
            <person name="Fonknechten N."/>
            <person name="Da Silva C."/>
            <person name="Cattolico L."/>
            <person name="Levy M."/>
            <person name="Barbe V."/>
            <person name="De Berardinis V."/>
            <person name="Ureta-Vidal A."/>
            <person name="Pelletier E."/>
            <person name="Vico V."/>
            <person name="Anthouard V."/>
            <person name="Rowen L."/>
            <person name="Madan A."/>
            <person name="Qin S."/>
            <person name="Sun H."/>
            <person name="Du H."/>
            <person name="Pepin K."/>
            <person name="Artiguenave F."/>
            <person name="Robert C."/>
            <person name="Cruaud C."/>
            <person name="Bruels T."/>
            <person name="Jaillon O."/>
            <person name="Friedlander L."/>
            <person name="Samson G."/>
            <person name="Brottier P."/>
            <person name="Cure S."/>
            <person name="Segurens B."/>
            <person name="Aniere F."/>
            <person name="Samain S."/>
            <person name="Crespeau H."/>
            <person name="Abbasi N."/>
            <person name="Aiach N."/>
            <person name="Boscus D."/>
            <person name="Dickhoff R."/>
            <person name="Dors M."/>
            <person name="Dubois I."/>
            <person name="Friedman C."/>
            <person name="Gouyvenoux M."/>
            <person name="James R."/>
            <person name="Madan A."/>
            <person name="Mairey-Estrada B."/>
            <person name="Mangenot S."/>
            <person name="Martins N."/>
            <person name="Menard M."/>
            <person name="Oztas S."/>
            <person name="Ratcliffe A."/>
            <person name="Shaffer T."/>
            <person name="Trask B."/>
            <person name="Vacherie B."/>
            <person name="Bellemere C."/>
            <person name="Belser C."/>
            <person name="Besnard-Gonnet M."/>
            <person name="Bartol-Mavel D."/>
            <person name="Boutard M."/>
            <person name="Briez-Silla S."/>
            <person name="Combette S."/>
            <person name="Dufosse-Laurent V."/>
            <person name="Ferron C."/>
            <person name="Lechaplais C."/>
            <person name="Louesse C."/>
            <person name="Muselet D."/>
            <person name="Magdelenat G."/>
            <person name="Pateau E."/>
            <person name="Petit E."/>
            <person name="Sirvain-Trukniewicz P."/>
            <person name="Trybou A."/>
            <person name="Vega-Czarny N."/>
            <person name="Bataille E."/>
            <person name="Bluet E."/>
            <person name="Bordelais I."/>
            <person name="Dubois M."/>
            <person name="Dumont C."/>
            <person name="Guerin T."/>
            <person name="Haffray S."/>
            <person name="Hammadi R."/>
            <person name="Muanga J."/>
            <person name="Pellouin V."/>
            <person name="Robert D."/>
            <person name="Wunderle E."/>
            <person name="Gauguet G."/>
            <person name="Roy A."/>
            <person name="Sainte-Marthe L."/>
            <person name="Verdier J."/>
            <person name="Verdier-Discala C."/>
            <person name="Hillier L.W."/>
            <person name="Fulton L."/>
            <person name="McPherson J."/>
            <person name="Matsuda F."/>
            <person name="Wilson R."/>
            <person name="Scarpelli C."/>
            <person name="Gyapay G."/>
            <person name="Wincker P."/>
            <person name="Saurin W."/>
            <person name="Quetier F."/>
            <person name="Waterston R."/>
            <person name="Hood L."/>
            <person name="Weissenbach J."/>
        </authorList>
    </citation>
    <scope>NUCLEOTIDE SEQUENCE [LARGE SCALE GENOMIC DNA]</scope>
</reference>
<reference key="5">
    <citation type="journal article" date="2004" name="Genome Res.">
        <title>The status, quality, and expansion of the NIH full-length cDNA project: the Mammalian Gene Collection (MGC).</title>
        <authorList>
            <consortium name="The MGC Project Team"/>
        </authorList>
    </citation>
    <scope>NUCLEOTIDE SEQUENCE [LARGE SCALE MRNA] (ISOFORMS 1 AND 4)</scope>
    <source>
        <tissue>Eye</tissue>
        <tissue>Hippocampus</tissue>
    </source>
</reference>
<reference key="6">
    <citation type="journal article" date="2005" name="EMBO J.">
        <title>Trafficking of TRPP2 by PACS proteins represents a novel mechanism of ion channel regulation.</title>
        <authorList>
            <person name="Koettgen M."/>
            <person name="Benzing T."/>
            <person name="Simmen T."/>
            <person name="Tauber R."/>
            <person name="Buchholz B."/>
            <person name="Feliciangeli S."/>
            <person name="Huber T.B."/>
            <person name="Schermer B."/>
            <person name="Kramer-Zucker A."/>
            <person name="Hoepker K."/>
            <person name="Simmen K.C."/>
            <person name="Tschucke C.C."/>
            <person name="Sandford R."/>
            <person name="Kim E."/>
            <person name="Thomas G."/>
            <person name="Walz G."/>
        </authorList>
    </citation>
    <scope>FUNCTION</scope>
    <scope>INTERACTION WITH PKD2</scope>
</reference>
<reference key="7">
    <citation type="journal article" date="2008" name="J. Biol. Chem.">
        <title>HIV-1 Nef binds PACS-2 to assemble a multikinase cascade that triggers major histocompatibility complex class I (MHC-I) down-regulation: analysis using short interfering RNA and knock-out mice.</title>
        <authorList>
            <person name="Atkins K.M."/>
            <person name="Thomas L."/>
            <person name="Youker R.T."/>
            <person name="Harriff M.J."/>
            <person name="Pissani F."/>
            <person name="You H."/>
            <person name="Thomas G."/>
        </authorList>
    </citation>
    <scope>INTERACTION WITH HIV-1 NEF (MICROBIAL INFECTION)</scope>
</reference>
<reference key="8">
    <citation type="journal article" date="2013" name="J. Proteome Res.">
        <title>Toward a comprehensive characterization of a human cancer cell phosphoproteome.</title>
        <authorList>
            <person name="Zhou H."/>
            <person name="Di Palma S."/>
            <person name="Preisinger C."/>
            <person name="Peng M."/>
            <person name="Polat A.N."/>
            <person name="Heck A.J."/>
            <person name="Mohammed S."/>
        </authorList>
    </citation>
    <scope>PHOSPHORYLATION [LARGE SCALE ANALYSIS] AT SER-416</scope>
    <scope>IDENTIFICATION BY MASS SPECTROMETRY [LARGE SCALE ANALYSIS]</scope>
    <source>
        <tissue>Erythroleukemia</tissue>
    </source>
</reference>
<reference key="9">
    <citation type="journal article" date="2014" name="J. Proteomics">
        <title>An enzyme assisted RP-RPLC approach for in-depth analysis of human liver phosphoproteome.</title>
        <authorList>
            <person name="Bian Y."/>
            <person name="Song C."/>
            <person name="Cheng K."/>
            <person name="Dong M."/>
            <person name="Wang F."/>
            <person name="Huang J."/>
            <person name="Sun D."/>
            <person name="Wang L."/>
            <person name="Ye M."/>
            <person name="Zou H."/>
        </authorList>
    </citation>
    <scope>PHOSPHORYLATION [LARGE SCALE ANALYSIS] AT SER-416 AND SER-453</scope>
    <scope>IDENTIFICATION BY MASS SPECTROMETRY [LARGE SCALE ANALYSIS]</scope>
    <source>
        <tissue>Liver</tissue>
    </source>
</reference>
<reference key="10">
    <citation type="journal article" date="2018" name="Am. J. Hum. Genet.">
        <title>A recurrent de novo PACS2 heterozygous missense variant causes neonatal-onset developmental epileptic encephalopathy, facial dysmorphism, and cerebellar dysgenesis.</title>
        <authorList>
            <consortium name="DDD Study"/>
            <consortium name="C4RCD Research Group"/>
            <person name="Olson H.E."/>
            <person name="Jean-Marcais N."/>
            <person name="Yang E."/>
            <person name="Heron D."/>
            <person name="Tatton-Brown K."/>
            <person name="van der Zwaag P.A."/>
            <person name="Bijlsma E.K."/>
            <person name="Krock B.L."/>
            <person name="Backer E."/>
            <person name="Kamsteeg E.J."/>
            <person name="Sinnema M."/>
            <person name="Reijnders M.R.F."/>
            <person name="Bearden D."/>
            <person name="Begtrup A."/>
            <person name="Telegrafi A."/>
            <person name="Lunsing R.J."/>
            <person name="Burglen L."/>
            <person name="Lesca G."/>
            <person name="Cho M.T."/>
            <person name="Smith L.A."/>
            <person name="Sheidley B.R."/>
            <person name="Moufawad El Achkar C."/>
            <person name="Pearl P.L."/>
            <person name="Poduri A."/>
            <person name="Skraban C.M."/>
            <person name="Tarpinian J."/>
            <person name="Nesbitt A.I."/>
            <person name="Fransen van de Putte D.E."/>
            <person name="Ruivenkamp C.A.L."/>
            <person name="Rump P."/>
            <person name="Chatron N."/>
            <person name="Sabatier I."/>
            <person name="De Bellescize J."/>
            <person name="Guibaud L."/>
            <person name="Sweetser D.A."/>
            <person name="Waxler J.L."/>
            <person name="Wierenga K.J."/>
            <person name="Donadieu J."/>
            <person name="Narayanan V."/>
            <person name="Ramsey K.M."/>
            <person name="Nava C."/>
            <person name="Riviere J.B."/>
            <person name="Vitobello A."/>
            <person name="Tran Mau-Them F."/>
            <person name="Philippe C."/>
            <person name="Bruel A.L."/>
            <person name="Duffourd Y."/>
            <person name="Thomas L."/>
            <person name="Lelieveld S.H."/>
            <person name="Schuurs-Hoeijmakers J."/>
            <person name="Brunner H.G."/>
            <person name="Keren B."/>
            <person name="Thevenon J."/>
            <person name="Faivre L."/>
            <person name="Thomas G."/>
            <person name="Thauvin-Robinet C."/>
        </authorList>
    </citation>
    <scope>INTERACTION WITH SIRT1; HDAC1 AND TRPV1</scope>
    <scope>INVOLVEMENT IN DEE66</scope>
    <scope>VARIANT DEE66 LYS-209</scope>
    <scope>CHARACTERIZATION OF VARIANT DEE66 LYS-209</scope>
</reference>
<reference key="11">
    <citation type="journal article" date="2021" name="Hum. Genet.">
        <title>WDR37 syndrome: identification of a distinct new cluster of disease-associated variants and functional analyses of mutant proteins.</title>
        <authorList>
            <person name="Sorokina E.A."/>
            <person name="Reis L.M."/>
            <person name="Thompson S."/>
            <person name="Agre K."/>
            <person name="Babovic-Vuksanovic D."/>
            <person name="Ellingson M.S."/>
            <person name="Hasadsri L."/>
            <person name="van Bever Y."/>
            <person name="Semina E.V."/>
        </authorList>
    </citation>
    <scope>INTERACTION WITH WDR37</scope>
</reference>
<accession>Q86VP3</accession>
<accession>A2VDJ9</accession>
<accession>G8JLK3</accession>
<accession>O60342</accession>
<accession>Q6P191</accession>
<accession>Q96FL7</accession>
<dbReference type="EMBL" id="AY320284">
    <property type="protein sequence ID" value="AAQ83882.2"/>
    <property type="molecule type" value="mRNA"/>
</dbReference>
<dbReference type="EMBL" id="AB011174">
    <property type="protein sequence ID" value="BAA25528.1"/>
    <property type="status" value="ALT_INIT"/>
    <property type="molecule type" value="mRNA"/>
</dbReference>
<dbReference type="EMBL" id="AL512355">
    <property type="status" value="NOT_ANNOTATED_CDS"/>
    <property type="molecule type" value="Genomic_DNA"/>
</dbReference>
<dbReference type="EMBL" id="AL928654">
    <property type="status" value="NOT_ANNOTATED_CDS"/>
    <property type="molecule type" value="Genomic_DNA"/>
</dbReference>
<dbReference type="EMBL" id="BC010663">
    <property type="protein sequence ID" value="AAH10663.1"/>
    <property type="molecule type" value="mRNA"/>
</dbReference>
<dbReference type="EMBL" id="BC050351">
    <property type="protein sequence ID" value="AAH50351.2"/>
    <property type="molecule type" value="mRNA"/>
</dbReference>
<dbReference type="EMBL" id="BC065220">
    <property type="protein sequence ID" value="AAH65220.2"/>
    <property type="molecule type" value="mRNA"/>
</dbReference>
<dbReference type="EMBL" id="BC131591">
    <property type="protein sequence ID" value="AAI31592.1"/>
    <property type="status" value="ALT_INIT"/>
    <property type="molecule type" value="mRNA"/>
</dbReference>
<dbReference type="CCDS" id="CCDS32168.1">
    <molecule id="Q86VP3-1"/>
</dbReference>
<dbReference type="CCDS" id="CCDS45178.2">
    <molecule id="Q86VP3-2"/>
</dbReference>
<dbReference type="CCDS" id="CCDS58339.1">
    <molecule id="Q86VP3-4"/>
</dbReference>
<dbReference type="PIR" id="T00262">
    <property type="entry name" value="T00262"/>
</dbReference>
<dbReference type="RefSeq" id="NP_001094383.2">
    <molecule id="Q86VP3-2"/>
    <property type="nucleotide sequence ID" value="NM_001100913.3"/>
</dbReference>
<dbReference type="RefSeq" id="NP_001230056.1">
    <molecule id="Q86VP3-4"/>
    <property type="nucleotide sequence ID" value="NM_001243127.3"/>
</dbReference>
<dbReference type="RefSeq" id="NP_056012.2">
    <molecule id="Q86VP3-1"/>
    <property type="nucleotide sequence ID" value="NM_015197.4"/>
</dbReference>
<dbReference type="BioGRID" id="116845">
    <property type="interactions" value="22"/>
</dbReference>
<dbReference type="CORUM" id="Q86VP3"/>
<dbReference type="ELM" id="Q86VP3"/>
<dbReference type="FunCoup" id="Q86VP3">
    <property type="interactions" value="2369"/>
</dbReference>
<dbReference type="IntAct" id="Q86VP3">
    <property type="interactions" value="17"/>
</dbReference>
<dbReference type="MINT" id="Q86VP3"/>
<dbReference type="STRING" id="9606.ENSP00000393559"/>
<dbReference type="TCDB" id="1.A.5.1.1">
    <property type="family name" value="the polycystin cation channel (pcc) family"/>
</dbReference>
<dbReference type="GlyCosmos" id="Q86VP3">
    <property type="glycosylation" value="2 sites, 1 glycan"/>
</dbReference>
<dbReference type="GlyGen" id="Q86VP3">
    <property type="glycosylation" value="3 sites, 1 O-linked glycan (2 sites)"/>
</dbReference>
<dbReference type="iPTMnet" id="Q86VP3"/>
<dbReference type="PhosphoSitePlus" id="Q86VP3"/>
<dbReference type="BioMuta" id="PACS2"/>
<dbReference type="DMDM" id="117949768"/>
<dbReference type="jPOST" id="Q86VP3"/>
<dbReference type="MassIVE" id="Q86VP3"/>
<dbReference type="PaxDb" id="9606-ENSP00000393559"/>
<dbReference type="PeptideAtlas" id="Q86VP3"/>
<dbReference type="ProteomicsDB" id="34256"/>
<dbReference type="ProteomicsDB" id="70048">
    <molecule id="Q86VP3-1"/>
</dbReference>
<dbReference type="ProteomicsDB" id="70049">
    <molecule id="Q86VP3-2"/>
</dbReference>
<dbReference type="Pumba" id="Q86VP3"/>
<dbReference type="Antibodypedia" id="93">
    <property type="antibodies" value="116 antibodies from 23 providers"/>
</dbReference>
<dbReference type="DNASU" id="23241"/>
<dbReference type="Ensembl" id="ENST00000325438.12">
    <molecule id="Q86VP3-1"/>
    <property type="protein sequence ID" value="ENSP00000321834.8"/>
    <property type="gene ID" value="ENSG00000179364.15"/>
</dbReference>
<dbReference type="Ensembl" id="ENST00000430725.6">
    <molecule id="Q86VP3-4"/>
    <property type="protein sequence ID" value="ENSP00000393524.2"/>
    <property type="gene ID" value="ENSG00000179364.15"/>
</dbReference>
<dbReference type="Ensembl" id="ENST00000447393.6">
    <molecule id="Q86VP3-2"/>
    <property type="protein sequence ID" value="ENSP00000393559.2"/>
    <property type="gene ID" value="ENSG00000179364.15"/>
</dbReference>
<dbReference type="GeneID" id="23241"/>
<dbReference type="KEGG" id="hsa:23241"/>
<dbReference type="MANE-Select" id="ENST00000447393.6">
    <molecule id="Q86VP3-2"/>
    <property type="protein sequence ID" value="ENSP00000393559.2"/>
    <property type="RefSeq nucleotide sequence ID" value="NM_001100913.3"/>
    <property type="RefSeq protein sequence ID" value="NP_001094383.2"/>
</dbReference>
<dbReference type="UCSC" id="uc001yqs.4">
    <molecule id="Q86VP3-1"/>
    <property type="organism name" value="human"/>
</dbReference>
<dbReference type="AGR" id="HGNC:23794"/>
<dbReference type="CTD" id="23241"/>
<dbReference type="DisGeNET" id="23241"/>
<dbReference type="GeneCards" id="PACS2"/>
<dbReference type="HGNC" id="HGNC:23794">
    <property type="gene designation" value="PACS2"/>
</dbReference>
<dbReference type="HPA" id="ENSG00000179364">
    <property type="expression patterns" value="Group enriched (brain, skeletal muscle)"/>
</dbReference>
<dbReference type="MalaCards" id="PACS2"/>
<dbReference type="MIM" id="610423">
    <property type="type" value="gene"/>
</dbReference>
<dbReference type="MIM" id="618067">
    <property type="type" value="phenotype"/>
</dbReference>
<dbReference type="neXtProt" id="NX_Q86VP3"/>
<dbReference type="OpenTargets" id="ENSG00000179364"/>
<dbReference type="Orphanet" id="442835">
    <property type="disease" value="Non-specific early-onset epileptic encephalopathy"/>
</dbReference>
<dbReference type="PharmGKB" id="PA134941470"/>
<dbReference type="VEuPathDB" id="HostDB:ENSG00000179364"/>
<dbReference type="eggNOG" id="KOG3709">
    <property type="taxonomic scope" value="Eukaryota"/>
</dbReference>
<dbReference type="GeneTree" id="ENSGT00950000183209"/>
<dbReference type="HOGENOM" id="CLU_013074_0_0_1"/>
<dbReference type="InParanoid" id="Q86VP3"/>
<dbReference type="OMA" id="FANWETD"/>
<dbReference type="OrthoDB" id="28829at2759"/>
<dbReference type="PAN-GO" id="Q86VP3">
    <property type="GO annotations" value="2 GO annotations based on evolutionary models"/>
</dbReference>
<dbReference type="PhylomeDB" id="Q86VP3"/>
<dbReference type="PathwayCommons" id="Q86VP3"/>
<dbReference type="SignaLink" id="Q86VP3"/>
<dbReference type="SIGNOR" id="Q86VP3"/>
<dbReference type="BioGRID-ORCS" id="23241">
    <property type="hits" value="21 hits in 1155 CRISPR screens"/>
</dbReference>
<dbReference type="ChiTaRS" id="PACS2">
    <property type="organism name" value="human"/>
</dbReference>
<dbReference type="GenomeRNAi" id="23241"/>
<dbReference type="Pharos" id="Q86VP3">
    <property type="development level" value="Tbio"/>
</dbReference>
<dbReference type="PRO" id="PR:Q86VP3"/>
<dbReference type="Proteomes" id="UP000005640">
    <property type="component" value="Chromosome 14"/>
</dbReference>
<dbReference type="RNAct" id="Q86VP3">
    <property type="molecule type" value="protein"/>
</dbReference>
<dbReference type="Bgee" id="ENSG00000179364">
    <property type="expression patterns" value="Expressed in C1 segment of cervical spinal cord and 193 other cell types or tissues"/>
</dbReference>
<dbReference type="ExpressionAtlas" id="Q86VP3">
    <property type="expression patterns" value="baseline and differential"/>
</dbReference>
<dbReference type="GO" id="GO:0005783">
    <property type="term" value="C:endoplasmic reticulum"/>
    <property type="evidence" value="ECO:0000314"/>
    <property type="project" value="BHF-UCL"/>
</dbReference>
<dbReference type="GO" id="GO:0005739">
    <property type="term" value="C:mitochondrion"/>
    <property type="evidence" value="ECO:0000314"/>
    <property type="project" value="HPA"/>
</dbReference>
<dbReference type="GO" id="GO:0044325">
    <property type="term" value="F:transmembrane transporter binding"/>
    <property type="evidence" value="ECO:0000318"/>
    <property type="project" value="GO_Central"/>
</dbReference>
<dbReference type="GO" id="GO:0006915">
    <property type="term" value="P:apoptotic process"/>
    <property type="evidence" value="ECO:0007669"/>
    <property type="project" value="UniProtKB-KW"/>
</dbReference>
<dbReference type="GO" id="GO:0000045">
    <property type="term" value="P:autophagosome assembly"/>
    <property type="evidence" value="ECO:0000314"/>
    <property type="project" value="MGI"/>
</dbReference>
<dbReference type="GO" id="GO:0032469">
    <property type="term" value="P:endoplasmic reticulum calcium ion homeostasis"/>
    <property type="evidence" value="ECO:0000315"/>
    <property type="project" value="CACAO"/>
</dbReference>
<dbReference type="GO" id="GO:1990456">
    <property type="term" value="P:mitochondrion-endoplasmic reticulum membrane tethering"/>
    <property type="evidence" value="ECO:0000315"/>
    <property type="project" value="CACAO"/>
</dbReference>
<dbReference type="GO" id="GO:0034497">
    <property type="term" value="P:protein localization to phagophore assembly site"/>
    <property type="evidence" value="ECO:0000314"/>
    <property type="project" value="MGI"/>
</dbReference>
<dbReference type="GO" id="GO:0072659">
    <property type="term" value="P:protein localization to plasma membrane"/>
    <property type="evidence" value="ECO:0000315"/>
    <property type="project" value="BHF-UCL"/>
</dbReference>
<dbReference type="InterPro" id="IPR019381">
    <property type="entry name" value="Phosphofurin_acidic_CS-1"/>
</dbReference>
<dbReference type="PANTHER" id="PTHR13280">
    <property type="entry name" value="PHOSPHOFURIN ACIDIC CLUSTER SORTING PROTEIN"/>
    <property type="match status" value="1"/>
</dbReference>
<dbReference type="PANTHER" id="PTHR13280:SF15">
    <property type="entry name" value="PHOSPHOFURIN ACIDIC CLUSTER SORTING PROTEIN 2"/>
    <property type="match status" value="1"/>
</dbReference>
<dbReference type="Pfam" id="PF25332">
    <property type="entry name" value="C2_PACS_N"/>
    <property type="match status" value="1"/>
</dbReference>
<dbReference type="Pfam" id="PF10254">
    <property type="entry name" value="Pacs-1"/>
    <property type="match status" value="1"/>
</dbReference>
<evidence type="ECO:0000250" key="1">
    <source>
        <dbReference type="UniProtKB" id="Q3V3Q7"/>
    </source>
</evidence>
<evidence type="ECO:0000256" key="2">
    <source>
        <dbReference type="SAM" id="MobiDB-lite"/>
    </source>
</evidence>
<evidence type="ECO:0000269" key="3">
    <source>
    </source>
</evidence>
<evidence type="ECO:0000269" key="4">
    <source>
    </source>
</evidence>
<evidence type="ECO:0000269" key="5">
    <source>
    </source>
</evidence>
<evidence type="ECO:0000269" key="6">
    <source>
    </source>
</evidence>
<evidence type="ECO:0000269" key="7">
    <source>
    </source>
</evidence>
<evidence type="ECO:0000303" key="8">
    <source>
    </source>
</evidence>
<evidence type="ECO:0000303" key="9">
    <source>
    </source>
</evidence>
<evidence type="ECO:0000305" key="10"/>
<evidence type="ECO:0000312" key="11">
    <source>
        <dbReference type="HGNC" id="HGNC:23794"/>
    </source>
</evidence>
<evidence type="ECO:0007744" key="12">
    <source>
    </source>
</evidence>
<evidence type="ECO:0007744" key="13">
    <source>
    </source>
</evidence>
<organism>
    <name type="scientific">Homo sapiens</name>
    <name type="common">Human</name>
    <dbReference type="NCBI Taxonomy" id="9606"/>
    <lineage>
        <taxon>Eukaryota</taxon>
        <taxon>Metazoa</taxon>
        <taxon>Chordata</taxon>
        <taxon>Craniata</taxon>
        <taxon>Vertebrata</taxon>
        <taxon>Euteleostomi</taxon>
        <taxon>Mammalia</taxon>
        <taxon>Eutheria</taxon>
        <taxon>Euarchontoglires</taxon>
        <taxon>Primates</taxon>
        <taxon>Haplorrhini</taxon>
        <taxon>Catarrhini</taxon>
        <taxon>Hominidae</taxon>
        <taxon>Homo</taxon>
    </lineage>
</organism>
<protein>
    <recommendedName>
        <fullName evidence="10">Phosphofurin acidic cluster sorting protein 2</fullName>
        <shortName>PACS-2</shortName>
    </recommendedName>
    <alternativeName>
        <fullName>PACS1-like protein</fullName>
    </alternativeName>
</protein>
<gene>
    <name evidence="11" type="primary">PACS2</name>
    <name type="synonym">KIAA0602</name>
    <name type="synonym">PACS1L</name>
</gene>
<keyword id="KW-0025">Alternative splicing</keyword>
<keyword id="KW-0053">Apoptosis</keyword>
<keyword id="KW-0225">Disease variant</keyword>
<keyword id="KW-0256">Endoplasmic reticulum</keyword>
<keyword id="KW-0887">Epilepsy</keyword>
<keyword id="KW-0945">Host-virus interaction</keyword>
<keyword id="KW-0496">Mitochondrion</keyword>
<keyword id="KW-0597">Phosphoprotein</keyword>
<keyword id="KW-1267">Proteomics identification</keyword>
<keyword id="KW-1185">Reference proteome</keyword>